<protein>
    <recommendedName>
        <fullName evidence="2">Peflin</fullName>
    </recommendedName>
    <alternativeName>
        <fullName evidence="2">PEF protein with a long N-terminal hydrophobic domain</fullName>
    </alternativeName>
    <alternativeName>
        <fullName evidence="6">Penta-EF hand domain-containing protein 1</fullName>
    </alternativeName>
</protein>
<comment type="function">
    <text evidence="1 2">Calcium-binding protein that acts as an adapter that bridges unrelated proteins or stabilizes weak protein-protein complexes in response to calcium. Together with PDCD6, acts as a calcium-dependent adapter for the BCR(KLHL12) complex, a complex involved in endoplasmic reticulum (ER)-Golgi transport by regulating the size of COPII coats. In response to cytosolic calcium increase, the heterodimer formed with PDCD6 interacts with, and bridges together the BCR(KLHL12) complex and SEC31 (SEC31A or SEC31B), promoting monoubiquitination of SEC31 and subsequent collagen export, which is required for neural crest specification. Its role in the heterodimer formed with PDCD6 is however unclear: some evidence shows that PEF1 and PDCD6 work together and promote association between PDCD6 and SEC31 in presence of calcium. Other reports show that PEF1 dissociates from PDCD6 in presence of calcium, and may act as a negative regulator of PDCD6 (By similarity). Also acts as a negative regulator of ER-Golgi transport; possibly by inhibiting interaction between PDCD6 and SEC31 (By similarity).</text>
</comment>
<comment type="subunit">
    <text evidence="2">Heterodimer; heterodimerizes (via the EF-hand 5) with PDCD6. Dissociates from PDCD6 in presence of calcium.</text>
</comment>
<comment type="subcellular location">
    <subcellularLocation>
        <location evidence="2">Cytoplasm</location>
    </subcellularLocation>
    <subcellularLocation>
        <location evidence="1">Endoplasmic reticulum</location>
    </subcellularLocation>
    <subcellularLocation>
        <location evidence="2">Membrane</location>
        <topology evidence="2">Peripheral membrane protein</topology>
    </subcellularLocation>
    <subcellularLocation>
        <location evidence="2">Cytoplasmic vesicle</location>
        <location evidence="2">COPII-coated vesicle membrane</location>
        <topology evidence="2">Peripheral membrane protein</topology>
    </subcellularLocation>
    <text evidence="1 2">Membrane-associated in the presence of Ca(2+) (By similarity). Localizes to endoplasmic reticulum exit site (ERES) (By similarity).</text>
</comment>
<comment type="PTM">
    <text evidence="2">Ubiquitinated by the BCR(KLHL12) E3 ubiquitin ligase complex.</text>
</comment>
<comment type="sequence caution" evidence="5">
    <conflict type="frameshift">
        <sequence resource="EMBL-CDS" id="BAB28735"/>
    </conflict>
</comment>
<gene>
    <name evidence="6" type="primary">Pef1</name>
</gene>
<dbReference type="EMBL" id="AK007394">
    <property type="protein sequence ID" value="BAB25010.1"/>
    <property type="molecule type" value="mRNA"/>
</dbReference>
<dbReference type="EMBL" id="AK013238">
    <property type="protein sequence ID" value="BAB28735.1"/>
    <property type="status" value="ALT_FRAME"/>
    <property type="molecule type" value="mRNA"/>
</dbReference>
<dbReference type="EMBL" id="AK046247">
    <property type="protein sequence ID" value="BAC32654.1"/>
    <property type="molecule type" value="mRNA"/>
</dbReference>
<dbReference type="EMBL" id="AK075978">
    <property type="protein sequence ID" value="BAC36091.1"/>
    <property type="molecule type" value="mRNA"/>
</dbReference>
<dbReference type="EMBL" id="BC019191">
    <property type="protein sequence ID" value="AAH19191.1"/>
    <property type="molecule type" value="mRNA"/>
</dbReference>
<dbReference type="CCDS" id="CCDS18706.1"/>
<dbReference type="RefSeq" id="NP_080717.2">
    <property type="nucleotide sequence ID" value="NM_026441.4"/>
</dbReference>
<dbReference type="SMR" id="Q8BFY6"/>
<dbReference type="BioGRID" id="212522">
    <property type="interactions" value="29"/>
</dbReference>
<dbReference type="FunCoup" id="Q8BFY6">
    <property type="interactions" value="1592"/>
</dbReference>
<dbReference type="STRING" id="10090.ENSMUSP00000112638"/>
<dbReference type="GlyGen" id="Q8BFY6">
    <property type="glycosylation" value="2 sites, 1 O-linked glycan (1 site)"/>
</dbReference>
<dbReference type="PhosphoSitePlus" id="Q8BFY6"/>
<dbReference type="SwissPalm" id="Q8BFY6"/>
<dbReference type="jPOST" id="Q8BFY6"/>
<dbReference type="PaxDb" id="10090-ENSMUSP00000112638"/>
<dbReference type="PeptideAtlas" id="Q8BFY6"/>
<dbReference type="ProteomicsDB" id="289345"/>
<dbReference type="Pumba" id="Q8BFY6"/>
<dbReference type="Antibodypedia" id="31143">
    <property type="antibodies" value="164 antibodies from 29 providers"/>
</dbReference>
<dbReference type="DNASU" id="67898"/>
<dbReference type="Ensembl" id="ENSMUST00000030563.6">
    <property type="protein sequence ID" value="ENSMUSP00000030563.6"/>
    <property type="gene ID" value="ENSMUSG00000028779.17"/>
</dbReference>
<dbReference type="Ensembl" id="ENSMUST00000118199.8">
    <property type="protein sequence ID" value="ENSMUSP00000112638.2"/>
    <property type="gene ID" value="ENSMUSG00000028779.17"/>
</dbReference>
<dbReference type="GeneID" id="67898"/>
<dbReference type="KEGG" id="mmu:67898"/>
<dbReference type="UCSC" id="uc008uyw.1">
    <property type="organism name" value="mouse"/>
</dbReference>
<dbReference type="AGR" id="MGI:1915148"/>
<dbReference type="CTD" id="553115"/>
<dbReference type="MGI" id="MGI:1915148">
    <property type="gene designation" value="Pef1"/>
</dbReference>
<dbReference type="VEuPathDB" id="HostDB:ENSMUSG00000028779"/>
<dbReference type="eggNOG" id="KOG0037">
    <property type="taxonomic scope" value="Eukaryota"/>
</dbReference>
<dbReference type="GeneTree" id="ENSGT00940000155722"/>
<dbReference type="HOGENOM" id="CLU_051357_1_0_1"/>
<dbReference type="InParanoid" id="Q8BFY6"/>
<dbReference type="OMA" id="YNKSYNP"/>
<dbReference type="OrthoDB" id="10248537at2759"/>
<dbReference type="PhylomeDB" id="Q8BFY6"/>
<dbReference type="TreeFam" id="TF314682"/>
<dbReference type="BioGRID-ORCS" id="67898">
    <property type="hits" value="2 hits in 75 CRISPR screens"/>
</dbReference>
<dbReference type="ChiTaRS" id="Pef1">
    <property type="organism name" value="mouse"/>
</dbReference>
<dbReference type="PRO" id="PR:Q8BFY6"/>
<dbReference type="Proteomes" id="UP000000589">
    <property type="component" value="Chromosome 4"/>
</dbReference>
<dbReference type="RNAct" id="Q8BFY6">
    <property type="molecule type" value="protein"/>
</dbReference>
<dbReference type="Bgee" id="ENSMUSG00000028779">
    <property type="expression patterns" value="Expressed in granulocyte and 260 other cell types or tissues"/>
</dbReference>
<dbReference type="GO" id="GO:0030127">
    <property type="term" value="C:COPII vesicle coat"/>
    <property type="evidence" value="ECO:0000250"/>
    <property type="project" value="UniProtKB"/>
</dbReference>
<dbReference type="GO" id="GO:0031463">
    <property type="term" value="C:Cul3-RING ubiquitin ligase complex"/>
    <property type="evidence" value="ECO:0000250"/>
    <property type="project" value="UniProtKB"/>
</dbReference>
<dbReference type="GO" id="GO:0005783">
    <property type="term" value="C:endoplasmic reticulum"/>
    <property type="evidence" value="ECO:0007669"/>
    <property type="project" value="UniProtKB-SubCell"/>
</dbReference>
<dbReference type="GO" id="GO:0005509">
    <property type="term" value="F:calcium ion binding"/>
    <property type="evidence" value="ECO:0007669"/>
    <property type="project" value="InterPro"/>
</dbReference>
<dbReference type="GO" id="GO:0048306">
    <property type="term" value="F:calcium-dependent protein binding"/>
    <property type="evidence" value="ECO:0007669"/>
    <property type="project" value="Ensembl"/>
</dbReference>
<dbReference type="GO" id="GO:0042802">
    <property type="term" value="F:identical protein binding"/>
    <property type="evidence" value="ECO:0007669"/>
    <property type="project" value="Ensembl"/>
</dbReference>
<dbReference type="GO" id="GO:0046982">
    <property type="term" value="F:protein heterodimerization activity"/>
    <property type="evidence" value="ECO:0007669"/>
    <property type="project" value="Ensembl"/>
</dbReference>
<dbReference type="GO" id="GO:1990756">
    <property type="term" value="F:ubiquitin-like ligase-substrate adaptor activity"/>
    <property type="evidence" value="ECO:0000250"/>
    <property type="project" value="UniProtKB"/>
</dbReference>
<dbReference type="GO" id="GO:0048208">
    <property type="term" value="P:COPII vesicle coating"/>
    <property type="evidence" value="ECO:0000250"/>
    <property type="project" value="UniProtKB"/>
</dbReference>
<dbReference type="GO" id="GO:0006888">
    <property type="term" value="P:endoplasmic reticulum to Golgi vesicle-mediated transport"/>
    <property type="evidence" value="ECO:0000250"/>
    <property type="project" value="UniProtKB"/>
</dbReference>
<dbReference type="GO" id="GO:0014032">
    <property type="term" value="P:neural crest cell development"/>
    <property type="evidence" value="ECO:0000250"/>
    <property type="project" value="UniProtKB"/>
</dbReference>
<dbReference type="GO" id="GO:0014029">
    <property type="term" value="P:neural crest formation"/>
    <property type="evidence" value="ECO:0000250"/>
    <property type="project" value="UniProtKB"/>
</dbReference>
<dbReference type="GO" id="GO:1902527">
    <property type="term" value="P:positive regulation of protein monoubiquitination"/>
    <property type="evidence" value="ECO:0000250"/>
    <property type="project" value="UniProtKB"/>
</dbReference>
<dbReference type="GO" id="GO:0051592">
    <property type="term" value="P:response to calcium ion"/>
    <property type="evidence" value="ECO:0007669"/>
    <property type="project" value="Ensembl"/>
</dbReference>
<dbReference type="CDD" id="cd16184">
    <property type="entry name" value="EFh_PEF_peflin"/>
    <property type="match status" value="1"/>
</dbReference>
<dbReference type="FunFam" id="1.10.238.10:FF:000139">
    <property type="entry name" value="Peflin isoform 1"/>
    <property type="match status" value="1"/>
</dbReference>
<dbReference type="Gene3D" id="1.10.238.10">
    <property type="entry name" value="EF-hand"/>
    <property type="match status" value="1"/>
</dbReference>
<dbReference type="InterPro" id="IPR011992">
    <property type="entry name" value="EF-hand-dom_pair"/>
</dbReference>
<dbReference type="InterPro" id="IPR018247">
    <property type="entry name" value="EF_Hand_1_Ca_BS"/>
</dbReference>
<dbReference type="InterPro" id="IPR002048">
    <property type="entry name" value="EF_hand_dom"/>
</dbReference>
<dbReference type="InterPro" id="IPR051426">
    <property type="entry name" value="Peflin/Sorcin_CaBP"/>
</dbReference>
<dbReference type="PANTHER" id="PTHR46212">
    <property type="entry name" value="PEFLIN"/>
    <property type="match status" value="1"/>
</dbReference>
<dbReference type="PANTHER" id="PTHR46212:SF10">
    <property type="entry name" value="PEFLIN"/>
    <property type="match status" value="1"/>
</dbReference>
<dbReference type="Pfam" id="PF13405">
    <property type="entry name" value="EF-hand_6"/>
    <property type="match status" value="1"/>
</dbReference>
<dbReference type="Pfam" id="PF13499">
    <property type="entry name" value="EF-hand_7"/>
    <property type="match status" value="1"/>
</dbReference>
<dbReference type="SMART" id="SM00054">
    <property type="entry name" value="EFh"/>
    <property type="match status" value="3"/>
</dbReference>
<dbReference type="SUPFAM" id="SSF47473">
    <property type="entry name" value="EF-hand"/>
    <property type="match status" value="1"/>
</dbReference>
<dbReference type="PROSITE" id="PS00018">
    <property type="entry name" value="EF_HAND_1"/>
    <property type="match status" value="2"/>
</dbReference>
<dbReference type="PROSITE" id="PS50222">
    <property type="entry name" value="EF_HAND_2"/>
    <property type="match status" value="2"/>
</dbReference>
<accession>Q8BFY6</accession>
<accession>Q8VCT5</accession>
<accession>Q9CYW8</accession>
<accession>Q9D934</accession>
<proteinExistence type="evidence at protein level"/>
<name>PEF1_MOUSE</name>
<organism>
    <name type="scientific">Mus musculus</name>
    <name type="common">Mouse</name>
    <dbReference type="NCBI Taxonomy" id="10090"/>
    <lineage>
        <taxon>Eukaryota</taxon>
        <taxon>Metazoa</taxon>
        <taxon>Chordata</taxon>
        <taxon>Craniata</taxon>
        <taxon>Vertebrata</taxon>
        <taxon>Euteleostomi</taxon>
        <taxon>Mammalia</taxon>
        <taxon>Eutheria</taxon>
        <taxon>Euarchontoglires</taxon>
        <taxon>Glires</taxon>
        <taxon>Rodentia</taxon>
        <taxon>Myomorpha</taxon>
        <taxon>Muroidea</taxon>
        <taxon>Muridae</taxon>
        <taxon>Murinae</taxon>
        <taxon>Mus</taxon>
        <taxon>Mus</taxon>
    </lineage>
</organism>
<feature type="chain" id="PRO_0000247046" description="Peflin">
    <location>
        <begin position="1"/>
        <end position="275"/>
    </location>
</feature>
<feature type="repeat" description="1">
    <location>
        <begin position="21"/>
        <end position="29"/>
    </location>
</feature>
<feature type="repeat" description="2">
    <location>
        <begin position="31"/>
        <end position="39"/>
    </location>
</feature>
<feature type="repeat" description="3">
    <location>
        <begin position="41"/>
        <end position="49"/>
    </location>
</feature>
<feature type="repeat" description="4">
    <location>
        <begin position="50"/>
        <end position="59"/>
    </location>
</feature>
<feature type="repeat" description="5">
    <location>
        <begin position="60"/>
        <end position="68"/>
    </location>
</feature>
<feature type="repeat" description="6">
    <location>
        <begin position="76"/>
        <end position="84"/>
    </location>
</feature>
<feature type="repeat" description="7">
    <location>
        <begin position="85"/>
        <end position="91"/>
    </location>
</feature>
<feature type="repeat" description="8">
    <location>
        <begin position="92"/>
        <end position="100"/>
    </location>
</feature>
<feature type="domain" description="EF-hand 1" evidence="3">
    <location>
        <begin position="105"/>
        <end position="140"/>
    </location>
</feature>
<feature type="domain" description="EF-hand 2" evidence="5">
    <location>
        <begin position="146"/>
        <end position="174"/>
    </location>
</feature>
<feature type="domain" description="EF-hand 3" evidence="3">
    <location>
        <begin position="172"/>
        <end position="207"/>
    </location>
</feature>
<feature type="domain" description="EF-hand 4" evidence="5">
    <location>
        <begin position="208"/>
        <end position="244"/>
    </location>
</feature>
<feature type="domain" description="EF-hand 5" evidence="5">
    <location>
        <begin position="245"/>
        <end position="274"/>
    </location>
</feature>
<feature type="region of interest" description="8 X 9 AA approximate tandem repeat of [AP]-P-G-G-P-Y-G-G-P-P">
    <location>
        <begin position="21"/>
        <end position="100"/>
    </location>
</feature>
<feature type="region of interest" description="Disordered" evidence="4">
    <location>
        <begin position="21"/>
        <end position="45"/>
    </location>
</feature>
<feature type="region of interest" description="Disordered" evidence="4">
    <location>
        <begin position="59"/>
        <end position="103"/>
    </location>
</feature>
<feature type="region of interest" description="Required for interaction with PDCD6" evidence="2">
    <location>
        <begin position="195"/>
        <end position="275"/>
    </location>
</feature>
<feature type="compositionally biased region" description="Gly residues" evidence="4">
    <location>
        <begin position="31"/>
        <end position="45"/>
    </location>
</feature>
<feature type="compositionally biased region" description="Low complexity" evidence="4">
    <location>
        <begin position="59"/>
        <end position="70"/>
    </location>
</feature>
<feature type="binding site" evidence="3">
    <location>
        <position position="118"/>
    </location>
    <ligand>
        <name>Ca(2+)</name>
        <dbReference type="ChEBI" id="CHEBI:29108"/>
        <label>1</label>
    </ligand>
</feature>
<feature type="binding site" evidence="3">
    <location>
        <position position="120"/>
    </location>
    <ligand>
        <name>Ca(2+)</name>
        <dbReference type="ChEBI" id="CHEBI:29108"/>
        <label>1</label>
    </ligand>
</feature>
<feature type="binding site" evidence="3">
    <location>
        <position position="122"/>
    </location>
    <ligand>
        <name>Ca(2+)</name>
        <dbReference type="ChEBI" id="CHEBI:29108"/>
        <label>1</label>
    </ligand>
</feature>
<feature type="binding site" evidence="3">
    <location>
        <position position="124"/>
    </location>
    <ligand>
        <name>Ca(2+)</name>
        <dbReference type="ChEBI" id="CHEBI:29108"/>
        <label>1</label>
    </ligand>
</feature>
<feature type="binding site" evidence="3">
    <location>
        <position position="129"/>
    </location>
    <ligand>
        <name>Ca(2+)</name>
        <dbReference type="ChEBI" id="CHEBI:29108"/>
        <label>1</label>
    </ligand>
</feature>
<feature type="binding site" evidence="3">
    <location>
        <position position="185"/>
    </location>
    <ligand>
        <name>Ca(2+)</name>
        <dbReference type="ChEBI" id="CHEBI:29108"/>
        <label>2</label>
    </ligand>
</feature>
<feature type="binding site" evidence="3">
    <location>
        <position position="187"/>
    </location>
    <ligand>
        <name>Ca(2+)</name>
        <dbReference type="ChEBI" id="CHEBI:29108"/>
        <label>2</label>
    </ligand>
</feature>
<feature type="binding site" evidence="3">
    <location>
        <position position="189"/>
    </location>
    <ligand>
        <name>Ca(2+)</name>
        <dbReference type="ChEBI" id="CHEBI:29108"/>
        <label>2</label>
    </ligand>
</feature>
<feature type="binding site" evidence="3">
    <location>
        <position position="191"/>
    </location>
    <ligand>
        <name>Ca(2+)</name>
        <dbReference type="ChEBI" id="CHEBI:29108"/>
        <label>2</label>
    </ligand>
</feature>
<feature type="binding site" evidence="3">
    <location>
        <position position="196"/>
    </location>
    <ligand>
        <name>Ca(2+)</name>
        <dbReference type="ChEBI" id="CHEBI:29108"/>
        <label>2</label>
    </ligand>
</feature>
<feature type="sequence conflict" description="In Ref. 2; AAH19191." evidence="5" ref="2">
    <original>L</original>
    <variation>H</variation>
    <location>
        <position position="148"/>
    </location>
</feature>
<feature type="sequence conflict" description="In Ref. 1; BAB28735." evidence="5" ref="1">
    <original>S</original>
    <variation>F</variation>
    <location>
        <position position="218"/>
    </location>
</feature>
<feature type="sequence conflict" description="In Ref. 1; BAB25010." evidence="5" ref="1">
    <original>G</original>
    <variation>R</variation>
    <location>
        <position position="257"/>
    </location>
</feature>
<sequence length="275" mass="29228">MASYPNGQSCPGAAGQVPGVPPGGYYPGPPHGGGQYGSGLPPGGGYGAPAPGGPYGYPSAGGVPSGTPSGPYGGIPPGGPYGQLPPGGPYGTQPGHYGQGGVPPNVDPEAYSWFQSVDADHSGYISLKELKQALVNSNWSSFNDETCLMMINMFDKTKSGRIDVAGFSALWKFLQQWRNLFQQYDRDRSGSISSTELQQALSQMGYNLSPQFTQLLVSRYCARSAIPAMQLDCFIKVCTQLQVLTEAFREKDTAVQGNIRLSFEDFVTMTASRML</sequence>
<reference key="1">
    <citation type="journal article" date="2005" name="Science">
        <title>The transcriptional landscape of the mammalian genome.</title>
        <authorList>
            <person name="Carninci P."/>
            <person name="Kasukawa T."/>
            <person name="Katayama S."/>
            <person name="Gough J."/>
            <person name="Frith M.C."/>
            <person name="Maeda N."/>
            <person name="Oyama R."/>
            <person name="Ravasi T."/>
            <person name="Lenhard B."/>
            <person name="Wells C."/>
            <person name="Kodzius R."/>
            <person name="Shimokawa K."/>
            <person name="Bajic V.B."/>
            <person name="Brenner S.E."/>
            <person name="Batalov S."/>
            <person name="Forrest A.R."/>
            <person name="Zavolan M."/>
            <person name="Davis M.J."/>
            <person name="Wilming L.G."/>
            <person name="Aidinis V."/>
            <person name="Allen J.E."/>
            <person name="Ambesi-Impiombato A."/>
            <person name="Apweiler R."/>
            <person name="Aturaliya R.N."/>
            <person name="Bailey T.L."/>
            <person name="Bansal M."/>
            <person name="Baxter L."/>
            <person name="Beisel K.W."/>
            <person name="Bersano T."/>
            <person name="Bono H."/>
            <person name="Chalk A.M."/>
            <person name="Chiu K.P."/>
            <person name="Choudhary V."/>
            <person name="Christoffels A."/>
            <person name="Clutterbuck D.R."/>
            <person name="Crowe M.L."/>
            <person name="Dalla E."/>
            <person name="Dalrymple B.P."/>
            <person name="de Bono B."/>
            <person name="Della Gatta G."/>
            <person name="di Bernardo D."/>
            <person name="Down T."/>
            <person name="Engstrom P."/>
            <person name="Fagiolini M."/>
            <person name="Faulkner G."/>
            <person name="Fletcher C.F."/>
            <person name="Fukushima T."/>
            <person name="Furuno M."/>
            <person name="Futaki S."/>
            <person name="Gariboldi M."/>
            <person name="Georgii-Hemming P."/>
            <person name="Gingeras T.R."/>
            <person name="Gojobori T."/>
            <person name="Green R.E."/>
            <person name="Gustincich S."/>
            <person name="Harbers M."/>
            <person name="Hayashi Y."/>
            <person name="Hensch T.K."/>
            <person name="Hirokawa N."/>
            <person name="Hill D."/>
            <person name="Huminiecki L."/>
            <person name="Iacono M."/>
            <person name="Ikeo K."/>
            <person name="Iwama A."/>
            <person name="Ishikawa T."/>
            <person name="Jakt M."/>
            <person name="Kanapin A."/>
            <person name="Katoh M."/>
            <person name="Kawasawa Y."/>
            <person name="Kelso J."/>
            <person name="Kitamura H."/>
            <person name="Kitano H."/>
            <person name="Kollias G."/>
            <person name="Krishnan S.P."/>
            <person name="Kruger A."/>
            <person name="Kummerfeld S.K."/>
            <person name="Kurochkin I.V."/>
            <person name="Lareau L.F."/>
            <person name="Lazarevic D."/>
            <person name="Lipovich L."/>
            <person name="Liu J."/>
            <person name="Liuni S."/>
            <person name="McWilliam S."/>
            <person name="Madan Babu M."/>
            <person name="Madera M."/>
            <person name="Marchionni L."/>
            <person name="Matsuda H."/>
            <person name="Matsuzawa S."/>
            <person name="Miki H."/>
            <person name="Mignone F."/>
            <person name="Miyake S."/>
            <person name="Morris K."/>
            <person name="Mottagui-Tabar S."/>
            <person name="Mulder N."/>
            <person name="Nakano N."/>
            <person name="Nakauchi H."/>
            <person name="Ng P."/>
            <person name="Nilsson R."/>
            <person name="Nishiguchi S."/>
            <person name="Nishikawa S."/>
            <person name="Nori F."/>
            <person name="Ohara O."/>
            <person name="Okazaki Y."/>
            <person name="Orlando V."/>
            <person name="Pang K.C."/>
            <person name="Pavan W.J."/>
            <person name="Pavesi G."/>
            <person name="Pesole G."/>
            <person name="Petrovsky N."/>
            <person name="Piazza S."/>
            <person name="Reed J."/>
            <person name="Reid J.F."/>
            <person name="Ring B.Z."/>
            <person name="Ringwald M."/>
            <person name="Rost B."/>
            <person name="Ruan Y."/>
            <person name="Salzberg S.L."/>
            <person name="Sandelin A."/>
            <person name="Schneider C."/>
            <person name="Schoenbach C."/>
            <person name="Sekiguchi K."/>
            <person name="Semple C.A."/>
            <person name="Seno S."/>
            <person name="Sessa L."/>
            <person name="Sheng Y."/>
            <person name="Shibata Y."/>
            <person name="Shimada H."/>
            <person name="Shimada K."/>
            <person name="Silva D."/>
            <person name="Sinclair B."/>
            <person name="Sperling S."/>
            <person name="Stupka E."/>
            <person name="Sugiura K."/>
            <person name="Sultana R."/>
            <person name="Takenaka Y."/>
            <person name="Taki K."/>
            <person name="Tammoja K."/>
            <person name="Tan S.L."/>
            <person name="Tang S."/>
            <person name="Taylor M.S."/>
            <person name="Tegner J."/>
            <person name="Teichmann S.A."/>
            <person name="Ueda H.R."/>
            <person name="van Nimwegen E."/>
            <person name="Verardo R."/>
            <person name="Wei C.L."/>
            <person name="Yagi K."/>
            <person name="Yamanishi H."/>
            <person name="Zabarovsky E."/>
            <person name="Zhu S."/>
            <person name="Zimmer A."/>
            <person name="Hide W."/>
            <person name="Bult C."/>
            <person name="Grimmond S.M."/>
            <person name="Teasdale R.D."/>
            <person name="Liu E.T."/>
            <person name="Brusic V."/>
            <person name="Quackenbush J."/>
            <person name="Wahlestedt C."/>
            <person name="Mattick J.S."/>
            <person name="Hume D.A."/>
            <person name="Kai C."/>
            <person name="Sasaki D."/>
            <person name="Tomaru Y."/>
            <person name="Fukuda S."/>
            <person name="Kanamori-Katayama M."/>
            <person name="Suzuki M."/>
            <person name="Aoki J."/>
            <person name="Arakawa T."/>
            <person name="Iida J."/>
            <person name="Imamura K."/>
            <person name="Itoh M."/>
            <person name="Kato T."/>
            <person name="Kawaji H."/>
            <person name="Kawagashira N."/>
            <person name="Kawashima T."/>
            <person name="Kojima M."/>
            <person name="Kondo S."/>
            <person name="Konno H."/>
            <person name="Nakano K."/>
            <person name="Ninomiya N."/>
            <person name="Nishio T."/>
            <person name="Okada M."/>
            <person name="Plessy C."/>
            <person name="Shibata K."/>
            <person name="Shiraki T."/>
            <person name="Suzuki S."/>
            <person name="Tagami M."/>
            <person name="Waki K."/>
            <person name="Watahiki A."/>
            <person name="Okamura-Oho Y."/>
            <person name="Suzuki H."/>
            <person name="Kawai J."/>
            <person name="Hayashizaki Y."/>
        </authorList>
    </citation>
    <scope>NUCLEOTIDE SEQUENCE [LARGE SCALE MRNA]</scope>
    <source>
        <strain>C57BL/6J</strain>
        <tissue>Corpora quadrigemina</tissue>
        <tissue>Pancreas</tissue>
    </source>
</reference>
<reference key="2">
    <citation type="journal article" date="2004" name="Genome Res.">
        <title>The status, quality, and expansion of the NIH full-length cDNA project: the Mammalian Gene Collection (MGC).</title>
        <authorList>
            <consortium name="The MGC Project Team"/>
        </authorList>
    </citation>
    <scope>NUCLEOTIDE SEQUENCE [LARGE SCALE MRNA]</scope>
    <source>
        <strain>FVB/N</strain>
        <tissue>Mammary tumor</tissue>
    </source>
</reference>
<reference key="3">
    <citation type="journal article" date="2010" name="Cell">
        <title>A tissue-specific atlas of mouse protein phosphorylation and expression.</title>
        <authorList>
            <person name="Huttlin E.L."/>
            <person name="Jedrychowski M.P."/>
            <person name="Elias J.E."/>
            <person name="Goswami T."/>
            <person name="Rad R."/>
            <person name="Beausoleil S.A."/>
            <person name="Villen J."/>
            <person name="Haas W."/>
            <person name="Sowa M.E."/>
            <person name="Gygi S.P."/>
        </authorList>
    </citation>
    <scope>IDENTIFICATION BY MASS SPECTROMETRY [LARGE SCALE ANALYSIS]</scope>
    <source>
        <tissue>Brain</tissue>
        <tissue>Heart</tissue>
        <tissue>Kidney</tissue>
        <tissue>Liver</tissue>
        <tissue>Lung</tissue>
        <tissue>Spleen</tissue>
        <tissue>Testis</tissue>
    </source>
</reference>
<evidence type="ECO:0000250" key="1">
    <source>
        <dbReference type="UniProtKB" id="Q641Z8"/>
    </source>
</evidence>
<evidence type="ECO:0000250" key="2">
    <source>
        <dbReference type="UniProtKB" id="Q9UBV8"/>
    </source>
</evidence>
<evidence type="ECO:0000255" key="3">
    <source>
        <dbReference type="PROSITE-ProRule" id="PRU00448"/>
    </source>
</evidence>
<evidence type="ECO:0000256" key="4">
    <source>
        <dbReference type="SAM" id="MobiDB-lite"/>
    </source>
</evidence>
<evidence type="ECO:0000305" key="5"/>
<evidence type="ECO:0000312" key="6">
    <source>
        <dbReference type="MGI" id="MGI:1915148"/>
    </source>
</evidence>
<keyword id="KW-0106">Calcium</keyword>
<keyword id="KW-0963">Cytoplasm</keyword>
<keyword id="KW-0968">Cytoplasmic vesicle</keyword>
<keyword id="KW-0256">Endoplasmic reticulum</keyword>
<keyword id="KW-0472">Membrane</keyword>
<keyword id="KW-0479">Metal-binding</keyword>
<keyword id="KW-1185">Reference proteome</keyword>
<keyword id="KW-0677">Repeat</keyword>
<keyword id="KW-0832">Ubl conjugation</keyword>